<feature type="signal peptide" evidence="3">
    <location>
        <begin position="1"/>
        <end position="18"/>
    </location>
</feature>
<feature type="propeptide" id="PRO_0000458088" description="Activation peptide" evidence="14">
    <location>
        <begin position="19"/>
        <end position="75"/>
    </location>
</feature>
<feature type="chain" id="PRO_5014161977" description="Carboxypeptidase B1" evidence="3">
    <location>
        <begin position="76"/>
        <end position="412"/>
    </location>
</feature>
<feature type="domain" description="Peptidase M14" evidence="5">
    <location>
        <begin position="118"/>
        <end position="408"/>
    </location>
</feature>
<feature type="active site" description="Proton donor/acceptor" evidence="5">
    <location>
        <position position="374"/>
    </location>
</feature>
<feature type="binding site" evidence="1">
    <location>
        <begin position="175"/>
        <end position="178"/>
    </location>
    <ligand>
        <name>a peptide</name>
        <dbReference type="ChEBI" id="CHEBI:60466"/>
    </ligand>
</feature>
<feature type="binding site" evidence="5 8 9 18 19">
    <location>
        <position position="175"/>
    </location>
    <ligand>
        <name>Zn(2+)</name>
        <dbReference type="ChEBI" id="CHEBI:29105"/>
        <note>catalytic</note>
    </ligand>
</feature>
<feature type="binding site" evidence="5 8 9 18 19">
    <location>
        <position position="178"/>
    </location>
    <ligand>
        <name>Zn(2+)</name>
        <dbReference type="ChEBI" id="CHEBI:29105"/>
        <note>catalytic</note>
    </ligand>
</feature>
<feature type="binding site" evidence="1">
    <location>
        <position position="230"/>
    </location>
    <ligand>
        <name>a peptide</name>
        <dbReference type="ChEBI" id="CHEBI:60466"/>
    </ligand>
</feature>
<feature type="binding site" evidence="1">
    <location>
        <begin position="246"/>
        <end position="247"/>
    </location>
    <ligand>
        <name>a peptide</name>
        <dbReference type="ChEBI" id="CHEBI:60466"/>
    </ligand>
</feature>
<feature type="binding site" evidence="5 8 9 18 19">
    <location>
        <position position="299"/>
    </location>
    <ligand>
        <name>Zn(2+)</name>
        <dbReference type="ChEBI" id="CHEBI:29105"/>
        <note>catalytic</note>
    </ligand>
</feature>
<feature type="binding site" evidence="1">
    <location>
        <begin position="300"/>
        <end position="301"/>
    </location>
    <ligand>
        <name>a peptide</name>
        <dbReference type="ChEBI" id="CHEBI:60466"/>
    </ligand>
</feature>
<feature type="binding site" evidence="1">
    <location>
        <position position="351"/>
    </location>
    <ligand>
        <name>a peptide</name>
        <dbReference type="ChEBI" id="CHEBI:60466"/>
    </ligand>
</feature>
<feature type="glycosylation site" description="N-linked (GlcNAc...) asparagine" evidence="4">
    <location>
        <position position="205"/>
    </location>
</feature>
<feature type="glycosylation site" description="N-linked (GlcNAc...) asparagine" evidence="4">
    <location>
        <position position="395"/>
    </location>
</feature>
<feature type="disulfide bond" evidence="8 9 18 19">
    <location>
        <begin position="240"/>
        <end position="263"/>
    </location>
</feature>
<feature type="mutagenesis site" description="Severe reduction in the interaction with Dengue virus type 2 infectious virion." evidence="9">
    <location>
        <begin position="36"/>
        <end position="37"/>
    </location>
</feature>
<feature type="mutagenesis site" description="Moderate reduction in the interaction with Dengue virus type 2 infectious virion." evidence="9">
    <original>EPRTR</original>
    <variation>APATA</variation>
    <location>
        <begin position="103"/>
        <end position="107"/>
    </location>
</feature>
<feature type="mutagenesis site" description="No effect on the interaction with Dengue virus type 2 infectious virion." evidence="9">
    <original>EPETR</original>
    <variation>APATA</variation>
    <location>
        <begin position="275"/>
        <end position="279"/>
    </location>
</feature>
<feature type="mutagenesis site" description="Enhances cleavage of C-terminal arginine residue, whereas cleavage of C-terminal lysine residue is not affected. Cleavage of C-terminal arginine residue is restored; when associated with E-358." evidence="9">
    <original>S</original>
    <variation>G</variation>
    <location>
        <position position="346"/>
    </location>
</feature>
<feature type="mutagenesis site" description="No effect on catalytic activity. No effect on affinity for S.tuberosum metallocarboxypeptidase inhibitor." evidence="8">
    <original>VL</original>
    <variation>IG</variation>
    <location>
        <begin position="349"/>
        <end position="350"/>
    </location>
</feature>
<feature type="mutagenesis site" description="Abolishes cleavage of C-terminal arginine residue, whereas cleavage of C-terminal lysine residue is not affected. Cleavage of C-terminal arginine residue is restored; when associated with G-346." evidence="9">
    <original>D</original>
    <variation>E</variation>
    <location>
        <position position="358"/>
    </location>
</feature>
<feature type="mutagenesis site" description="No effect on catalytic activity. No effect on affinity for S.tuberosum metallocarboxypeptidase inhibitor." evidence="8">
    <original>N</original>
    <variation>MW</variation>
    <location>
        <position position="380"/>
    </location>
</feature>
<feature type="mutagenesis site" description="No effect on the interaction with Dengue virus type 2 infectious virion." evidence="9">
    <location>
        <begin position="408"/>
        <end position="412"/>
    </location>
</feature>
<feature type="sequence conflict" description="In Ref. 1; AAT36732/AAT36735." evidence="13" ref="1">
    <original>I</original>
    <variation>T</variation>
    <location>
        <position position="5"/>
    </location>
</feature>
<feature type="sequence conflict" description="In Ref. 1; AAT36732/AAT36735." evidence="13" ref="1">
    <original>T</original>
    <variation>S</variation>
    <location>
        <position position="239"/>
    </location>
</feature>
<feature type="strand" evidence="20">
    <location>
        <begin position="26"/>
        <end position="30"/>
    </location>
</feature>
<feature type="helix" evidence="20">
    <location>
        <begin position="35"/>
        <end position="47"/>
    </location>
</feature>
<feature type="strand" evidence="20">
    <location>
        <begin position="51"/>
        <end position="55"/>
    </location>
</feature>
<feature type="strand" evidence="20">
    <location>
        <begin position="64"/>
        <end position="68"/>
    </location>
</feature>
<feature type="helix" evidence="20">
    <location>
        <begin position="70"/>
        <end position="82"/>
    </location>
</feature>
<feature type="strand" evidence="20">
    <location>
        <begin position="87"/>
        <end position="92"/>
    </location>
</feature>
<feature type="helix" evidence="20">
    <location>
        <begin position="122"/>
        <end position="135"/>
    </location>
</feature>
<feature type="turn" evidence="20">
    <location>
        <begin position="137"/>
        <end position="139"/>
    </location>
</feature>
<feature type="strand" evidence="20">
    <location>
        <begin position="140"/>
        <end position="147"/>
    </location>
</feature>
<feature type="strand" evidence="20">
    <location>
        <begin position="153"/>
        <end position="160"/>
    </location>
</feature>
<feature type="strand" evidence="20">
    <location>
        <begin position="166"/>
        <end position="172"/>
    </location>
</feature>
<feature type="helix" evidence="20">
    <location>
        <begin position="180"/>
        <end position="194"/>
    </location>
</feature>
<feature type="helix" evidence="20">
    <location>
        <begin position="196"/>
        <end position="198"/>
    </location>
</feature>
<feature type="helix" evidence="20">
    <location>
        <begin position="200"/>
        <end position="202"/>
    </location>
</feature>
<feature type="strand" evidence="20">
    <location>
        <begin position="203"/>
        <end position="212"/>
    </location>
</feature>
<feature type="helix" evidence="20">
    <location>
        <begin position="216"/>
        <end position="224"/>
    </location>
</feature>
<feature type="strand" evidence="20">
    <location>
        <begin position="237"/>
        <end position="239"/>
    </location>
</feature>
<feature type="helix" evidence="20">
    <location>
        <begin position="245"/>
        <end position="247"/>
    </location>
</feature>
<feature type="strand" evidence="20">
    <location>
        <begin position="249"/>
        <end position="252"/>
    </location>
</feature>
<feature type="strand" evidence="20">
    <location>
        <begin position="255"/>
        <end position="257"/>
    </location>
</feature>
<feature type="helix" evidence="20">
    <location>
        <begin position="276"/>
        <end position="286"/>
    </location>
</feature>
<feature type="turn" evidence="20">
    <location>
        <begin position="287"/>
        <end position="290"/>
    </location>
</feature>
<feature type="strand" evidence="20">
    <location>
        <begin position="292"/>
        <end position="308"/>
    </location>
</feature>
<feature type="helix" evidence="20">
    <location>
        <begin position="319"/>
        <end position="337"/>
    </location>
</feature>
<feature type="strand" evidence="20">
    <location>
        <begin position="342"/>
        <end position="345"/>
    </location>
</feature>
<feature type="helix" evidence="20">
    <location>
        <begin position="346"/>
        <end position="349"/>
    </location>
</feature>
<feature type="helix" evidence="20">
    <location>
        <begin position="357"/>
        <end position="363"/>
    </location>
</feature>
<feature type="strand" evidence="20">
    <location>
        <begin position="368"/>
        <end position="375"/>
    </location>
</feature>
<feature type="turn" evidence="20">
    <location>
        <begin position="379"/>
        <end position="381"/>
    </location>
</feature>
<feature type="helix" evidence="20">
    <location>
        <begin position="387"/>
        <end position="389"/>
    </location>
</feature>
<feature type="helix" evidence="20">
    <location>
        <begin position="390"/>
        <end position="411"/>
    </location>
</feature>
<comment type="function">
    <text evidence="7 9">Carboxypeptidase that preferentially hydrolyzes arginine and lysine residues at the C-terminus (PubMed:34750241). During infection by dengue virus, may play a role in preventing viral packaging, maturation, and release from the midgut (PubMed:25521592).</text>
</comment>
<comment type="catalytic activity">
    <reaction evidence="8 9">
        <text>Preferential release of a C-terminal lysine or arginine amino acid.</text>
        <dbReference type="EC" id="3.4.17.2"/>
    </reaction>
</comment>
<comment type="cofactor">
    <cofactor evidence="2">
        <name>Zn(2+)</name>
        <dbReference type="ChEBI" id="CHEBI:29105"/>
    </cofactor>
    <text evidence="8 9">Binds 1 zinc ion per subunit.</text>
</comment>
<comment type="activity regulation">
    <text evidence="8">Inhibited by S.tuberosum metallocarboxypeptidase inhibitor.</text>
</comment>
<comment type="subunit">
    <text evidence="7 9">Monomer (PubMed:34750241). Interacts with Dengue virus type 2 (DENV2, MY89-88549 strain) envelope protein E (PubMed:25521592, PubMed:34750241). Interacts with Dengue virus envelope protein E type 3, type 2, type 4 and type 1 with decreasing strength (PubMed:34750241).</text>
</comment>
<comment type="subcellular location">
    <subcellularLocation>
        <location evidence="7">Endoplasmic reticulum</location>
    </subcellularLocation>
</comment>
<comment type="tissue specificity">
    <text evidence="7">Expressed in midgut (at protein level).</text>
</comment>
<comment type="induction">
    <text evidence="6">Up-regulated in the midgut 24 hours after a blood meal.</text>
</comment>
<comment type="similarity">
    <text evidence="13">Belongs to the peptidase M14 family.</text>
</comment>
<keyword id="KW-0002">3D-structure</keyword>
<keyword id="KW-0121">Carboxypeptidase</keyword>
<keyword id="KW-1015">Disulfide bond</keyword>
<keyword id="KW-0256">Endoplasmic reticulum</keyword>
<keyword id="KW-0325">Glycoprotein</keyword>
<keyword id="KW-0378">Hydrolase</keyword>
<keyword id="KW-0479">Metal-binding</keyword>
<keyword id="KW-0482">Metalloprotease</keyword>
<keyword id="KW-0645">Protease</keyword>
<keyword id="KW-1185">Reference proteome</keyword>
<keyword id="KW-0732">Signal</keyword>
<keyword id="KW-0862">Zinc</keyword>
<keyword id="KW-0865">Zymogen</keyword>
<name>CBPB1_AEDAE</name>
<gene>
    <name evidence="11" type="primary">CPB1</name>
    <name evidence="10" type="synonym">CPB-I</name>
</gene>
<protein>
    <recommendedName>
        <fullName evidence="11">Carboxypeptidase B1</fullName>
        <shortName evidence="10">AaCPB-I</shortName>
        <shortName evidence="12">CPBAe1</shortName>
        <ecNumber evidence="8 9">3.4.17.2</ecNumber>
    </recommendedName>
</protein>
<organism evidence="17">
    <name type="scientific">Aedes aegypti</name>
    <name type="common">Yellowfever mosquito</name>
    <name type="synonym">Culex aegypti</name>
    <dbReference type="NCBI Taxonomy" id="7159"/>
    <lineage>
        <taxon>Eukaryota</taxon>
        <taxon>Metazoa</taxon>
        <taxon>Ecdysozoa</taxon>
        <taxon>Arthropoda</taxon>
        <taxon>Hexapoda</taxon>
        <taxon>Insecta</taxon>
        <taxon>Pterygota</taxon>
        <taxon>Neoptera</taxon>
        <taxon>Endopterygota</taxon>
        <taxon>Diptera</taxon>
        <taxon>Nematocera</taxon>
        <taxon>Culicoidea</taxon>
        <taxon>Culicidae</taxon>
        <taxon>Culicinae</taxon>
        <taxon>Aedini</taxon>
        <taxon>Aedes</taxon>
        <taxon>Stegomyia</taxon>
    </lineage>
</organism>
<proteinExistence type="evidence at protein level"/>
<reference evidence="15 16" key="1">
    <citation type="submission" date="2004-04" db="EMBL/GenBank/DDBJ databases">
        <title>Molecular cloning of carboxypeptidase genes and their pattern of gene expression in Aedes aegypti mosquito.</title>
        <authorList>
            <person name="Isoe J."/>
            <person name="Amenezes A."/>
            <person name="Wells M.A."/>
        </authorList>
    </citation>
    <scope>NUCLEOTIDE SEQUENCE [GENOMIC DNA / MRNA]</scope>
</reference>
<reference evidence="17" key="2">
    <citation type="submission" date="2017-06" db="EMBL/GenBank/DDBJ databases">
        <title>Aedes aegypti genome working group (AGWG) sequencing and assembly.</title>
        <authorList>
            <consortium name="Aedes aegypti Genome Working Group (AGWG)"/>
            <person name="Matthews B.J."/>
        </authorList>
    </citation>
    <scope>NUCLEOTIDE SEQUENCE [LARGE SCALE GENOMIC DNA]</scope>
    <source>
        <strain evidence="17">LVP_AGWG</strain>
    </source>
</reference>
<reference evidence="13" key="3">
    <citation type="journal article" date="2009" name="Insect Biochem. Mol. Biol.">
        <title>Molecular analysis of the Aedes aegypti carboxypeptidase gene family.</title>
        <authorList>
            <person name="Isoe J."/>
            <person name="Zamora J."/>
            <person name="Miesfeld R.L."/>
        </authorList>
    </citation>
    <scope>INDUCTION</scope>
</reference>
<reference evidence="13" key="4">
    <citation type="journal article" date="2014" name="Viruses">
        <title>CPB1 of Aedes aegypti interacts with DENV2 E protein and regulates intracellular viral accumulation and release from midgut cells.</title>
        <authorList>
            <person name="Tham H.W."/>
            <person name="Balasubramaniam V.R."/>
            <person name="Tejo B.A."/>
            <person name="Ahmad H."/>
            <person name="Hassan S.S."/>
        </authorList>
    </citation>
    <scope>FUNCTION</scope>
    <scope>INTERACTION WITH DENGUE VIRUS ENVELOPE PROTEIN E</scope>
    <scope>SUBCELLULAR LOCATION</scope>
    <scope>TISSUE SPECIFICITY</scope>
</reference>
<reference evidence="19" key="5">
    <citation type="journal article" date="2021" name="Protein Sci.">
        <title>Structure of Aedes aegypti carboxypeptidase B1-inhibitor complex uncover the disparity between mosquito and non-mosquito insect carboxypeptidase inhibition mechanism.</title>
        <authorList>
            <person name="Gavor E."/>
            <person name="Choong Y.K."/>
            <person name="Jobichen C."/>
            <person name="Mok Y.K."/>
            <person name="Kini R.M."/>
            <person name="Sivaraman J."/>
        </authorList>
    </citation>
    <scope>X-RAY CRYSTALLOGRAPHY (2.20 ANGSTROMS) OF 114-412 IN COMPLEX WITH ZINC AND S.TUBEROSUM MCPI</scope>
    <scope>CATALYTIC ACTIVITY</scope>
    <scope>COFACTOR</scope>
    <scope>ACTIVITY REGULATION</scope>
    <scope>DISULFIDE BOND</scope>
    <scope>MUTAGENESIS OF 349-VAL-LEU-350 AND ASN-380</scope>
</reference>
<reference evidence="18" key="6">
    <citation type="journal article" date="2022" name="Life. Sci Alliance">
        <title>Structure of Aedes aegypti procarboxypeptidase B1 and its binding with Dengue virus for controlling infection.</title>
        <authorList>
            <person name="Gavor E."/>
            <person name="Choong Y.K."/>
            <person name="Tulsian N.K."/>
            <person name="Nayak D."/>
            <person name="Idris F."/>
            <person name="Sivaraman H."/>
            <person name="Ting D.H.R."/>
            <person name="Sylvie A."/>
            <person name="Mok Y.K."/>
            <person name="Kini R.M."/>
            <person name="Sivaraman J."/>
        </authorList>
    </citation>
    <scope>X-RAY CRYSTALLOGRAPHY (2.08 ANGSTROMS) OF 19-113 AND 114-412 IN COMPLEX WITH ZINC</scope>
    <scope>FUNCTION</scope>
    <scope>CATALYTIC ACTIVITY</scope>
    <scope>COFACTOR</scope>
    <scope>SUBUNIT</scope>
    <scope>INTERACTION WITH DENGUE VIRUS ENVELOPE PROTEIN E</scope>
    <scope>DISULFIDE BOND</scope>
    <scope>MUTAGENESIS OF 36-ASP-GLU-37; 103-GLU--ARG-107; 275-GLU--ARG-279; SER-346; ASP-358 AND 408-VAL--PHE-412</scope>
</reference>
<accession>A0A1S4F020</accession>
<accession>Q6J661</accession>
<sequence>MIPRIVVVLLSVLAVVTARRSYEGYKVYGIVPESPDEAEILYQIRQSNPDLDFWHLTKQPGDEARVLVAPKDQRSFLIKLIRHGLHYQEVISDVEGTLAPYNEPRTRGMSLDRDVSTSYLRHNEINEYLQTLSQKYPSLVSVEEAGTSYEGRSIKTITINKKPGNAVVFLDAGIHAREWIAPATALYAIEQLVEHSSENQEVLSNLTWVIMPVVNPDGYEFSHETDRFWRKTRKPTGKTCKGTDGNRNFDYHWGEVGASTQACADTFRGETAFSEPETRAVRDAVMKLKGSCKFYLSLHSYGNYILYPWGWTSKLPETWEAIDEVAQAGAEAIKQSTGSRYTVGSSTNVLYAAAGGSDDWAFAVAEVPISITMELPGGGNGGFNPPPSSIEKIVNESWVGIKAMALKVAQMF</sequence>
<dbReference type="EC" id="3.4.17.2" evidence="8 9"/>
<dbReference type="EMBL" id="AY590494">
    <property type="protein sequence ID" value="AAT36732.1"/>
    <property type="molecule type" value="mRNA"/>
</dbReference>
<dbReference type="EMBL" id="AY593982">
    <property type="protein sequence ID" value="AAT36735.1"/>
    <property type="molecule type" value="Genomic_DNA"/>
</dbReference>
<dbReference type="PDB" id="7EQX">
    <property type="method" value="X-ray"/>
    <property type="resolution" value="2.08 A"/>
    <property type="chains" value="A/B=19-113, C/D=114-412"/>
</dbReference>
<dbReference type="PDB" id="7EQZ">
    <property type="method" value="X-ray"/>
    <property type="resolution" value="2.20 A"/>
    <property type="chains" value="A=114-412"/>
</dbReference>
<dbReference type="PDBsum" id="7EQX"/>
<dbReference type="PDBsum" id="7EQZ"/>
<dbReference type="SMR" id="A0A1S4F020"/>
<dbReference type="FunCoup" id="A0A1S4F020">
    <property type="interactions" value="29"/>
</dbReference>
<dbReference type="MEROPS" id="M14.A04"/>
<dbReference type="EnsemblMetazoa" id="AAEL001863-RA">
    <property type="protein sequence ID" value="AAEL001863-PA"/>
    <property type="gene ID" value="AAEL001863"/>
</dbReference>
<dbReference type="VEuPathDB" id="VectorBase:AAEL001863"/>
<dbReference type="HOGENOM" id="CLU_019326_2_1_1"/>
<dbReference type="InParanoid" id="A0A1S4F020"/>
<dbReference type="OrthoDB" id="3626597at2759"/>
<dbReference type="Proteomes" id="UP000008820">
    <property type="component" value="Chromosome 2"/>
</dbReference>
<dbReference type="GO" id="GO:0005783">
    <property type="term" value="C:endoplasmic reticulum"/>
    <property type="evidence" value="ECO:0007669"/>
    <property type="project" value="UniProtKB-SubCell"/>
</dbReference>
<dbReference type="GO" id="GO:0005615">
    <property type="term" value="C:extracellular space"/>
    <property type="evidence" value="ECO:0007669"/>
    <property type="project" value="TreeGrafter"/>
</dbReference>
<dbReference type="GO" id="GO:0004181">
    <property type="term" value="F:metallocarboxypeptidase activity"/>
    <property type="evidence" value="ECO:0000314"/>
    <property type="project" value="UniProtKB"/>
</dbReference>
<dbReference type="GO" id="GO:0008270">
    <property type="term" value="F:zinc ion binding"/>
    <property type="evidence" value="ECO:0000314"/>
    <property type="project" value="UniProtKB"/>
</dbReference>
<dbReference type="GO" id="GO:0006508">
    <property type="term" value="P:proteolysis"/>
    <property type="evidence" value="ECO:0000314"/>
    <property type="project" value="UniProtKB"/>
</dbReference>
<dbReference type="CDD" id="cd03860">
    <property type="entry name" value="M14_CP_A-B_like"/>
    <property type="match status" value="1"/>
</dbReference>
<dbReference type="FunFam" id="3.40.630.10:FF:000001">
    <property type="entry name" value="Carboxypeptidase B"/>
    <property type="match status" value="1"/>
</dbReference>
<dbReference type="Gene3D" id="3.30.70.340">
    <property type="entry name" value="Metallocarboxypeptidase-like"/>
    <property type="match status" value="1"/>
</dbReference>
<dbReference type="Gene3D" id="3.40.630.10">
    <property type="entry name" value="Zn peptidases"/>
    <property type="match status" value="1"/>
</dbReference>
<dbReference type="InterPro" id="IPR036990">
    <property type="entry name" value="M14A-like_propep"/>
</dbReference>
<dbReference type="InterPro" id="IPR003146">
    <property type="entry name" value="M14A_act_pep"/>
</dbReference>
<dbReference type="InterPro" id="IPR000834">
    <property type="entry name" value="Peptidase_M14"/>
</dbReference>
<dbReference type="PANTHER" id="PTHR11705:SF140">
    <property type="entry name" value="FI02848P-RELATED"/>
    <property type="match status" value="1"/>
</dbReference>
<dbReference type="PANTHER" id="PTHR11705">
    <property type="entry name" value="PROTEASE FAMILY M14 CARBOXYPEPTIDASE A,B"/>
    <property type="match status" value="1"/>
</dbReference>
<dbReference type="Pfam" id="PF00246">
    <property type="entry name" value="Peptidase_M14"/>
    <property type="match status" value="1"/>
</dbReference>
<dbReference type="Pfam" id="PF02244">
    <property type="entry name" value="Propep_M14"/>
    <property type="match status" value="1"/>
</dbReference>
<dbReference type="PRINTS" id="PR00765">
    <property type="entry name" value="CRBOXYPTASEA"/>
</dbReference>
<dbReference type="SMART" id="SM00631">
    <property type="entry name" value="Zn_pept"/>
    <property type="match status" value="1"/>
</dbReference>
<dbReference type="SUPFAM" id="SSF54897">
    <property type="entry name" value="Protease propeptides/inhibitors"/>
    <property type="match status" value="1"/>
</dbReference>
<dbReference type="SUPFAM" id="SSF53187">
    <property type="entry name" value="Zn-dependent exopeptidases"/>
    <property type="match status" value="1"/>
</dbReference>
<dbReference type="PROSITE" id="PS52035">
    <property type="entry name" value="PEPTIDASE_M14"/>
    <property type="match status" value="1"/>
</dbReference>
<evidence type="ECO:0000250" key="1">
    <source>
        <dbReference type="UniProtKB" id="P00730"/>
    </source>
</evidence>
<evidence type="ECO:0000250" key="2">
    <source>
        <dbReference type="UniProtKB" id="P15086"/>
    </source>
</evidence>
<evidence type="ECO:0000255" key="3"/>
<evidence type="ECO:0000255" key="4">
    <source>
        <dbReference type="PROSITE-ProRule" id="PRU00498"/>
    </source>
</evidence>
<evidence type="ECO:0000255" key="5">
    <source>
        <dbReference type="PROSITE-ProRule" id="PRU01379"/>
    </source>
</evidence>
<evidence type="ECO:0000269" key="6">
    <source>
    </source>
</evidence>
<evidence type="ECO:0000269" key="7">
    <source>
    </source>
</evidence>
<evidence type="ECO:0000269" key="8">
    <source>
    </source>
</evidence>
<evidence type="ECO:0000269" key="9">
    <source>
    </source>
</evidence>
<evidence type="ECO:0000303" key="10">
    <source>
    </source>
</evidence>
<evidence type="ECO:0000303" key="11">
    <source>
    </source>
</evidence>
<evidence type="ECO:0000303" key="12">
    <source>
    </source>
</evidence>
<evidence type="ECO:0000305" key="13"/>
<evidence type="ECO:0000305" key="14">
    <source>
    </source>
</evidence>
<evidence type="ECO:0000312" key="15">
    <source>
        <dbReference type="EMBL" id="AAT36732.1"/>
    </source>
</evidence>
<evidence type="ECO:0000312" key="16">
    <source>
        <dbReference type="EMBL" id="AAT36735.1"/>
    </source>
</evidence>
<evidence type="ECO:0000312" key="17">
    <source>
        <dbReference type="EnsemblMetazoa" id="AAEL001863-PA"/>
    </source>
</evidence>
<evidence type="ECO:0007744" key="18">
    <source>
        <dbReference type="PDB" id="7EQX"/>
    </source>
</evidence>
<evidence type="ECO:0007744" key="19">
    <source>
        <dbReference type="PDB" id="7EQZ"/>
    </source>
</evidence>
<evidence type="ECO:0007829" key="20">
    <source>
        <dbReference type="PDB" id="7EQX"/>
    </source>
</evidence>